<evidence type="ECO:0000250" key="1"/>
<evidence type="ECO:0000255" key="2"/>
<evidence type="ECO:0000303" key="3">
    <source>
    </source>
</evidence>
<evidence type="ECO:0000305" key="4"/>
<protein>
    <recommendedName>
        <fullName>U14-theraphotoxin-Cg1b</fullName>
        <shortName>U14-TRTX-Cg1b</shortName>
    </recommendedName>
    <alternativeName>
        <fullName evidence="3">Jingzhaotoxin-22</fullName>
        <shortName evidence="3">JZTX-22</shortName>
    </alternativeName>
</protein>
<comment type="function">
    <text>Probable ion channel inhibitor.</text>
</comment>
<comment type="subcellular location">
    <subcellularLocation>
        <location evidence="1">Secreted</location>
    </subcellularLocation>
</comment>
<comment type="tissue specificity">
    <text>Expressed by the venom gland.</text>
</comment>
<comment type="domain">
    <text evidence="1">The presence of a 'disulfide through disulfide knot' structurally defines this protein as a knottin.</text>
</comment>
<comment type="similarity">
    <text evidence="4">Belongs to the neurotoxin 10 (Hwtx-1) family. 65 (Jztx-21) subfamily.</text>
</comment>
<keyword id="KW-1015">Disulfide bond</keyword>
<keyword id="KW-0872">Ion channel impairing toxin</keyword>
<keyword id="KW-0960">Knottin</keyword>
<keyword id="KW-0964">Secreted</keyword>
<keyword id="KW-0732">Signal</keyword>
<keyword id="KW-0800">Toxin</keyword>
<proteinExistence type="evidence at transcript level"/>
<reference key="1">
    <citation type="journal article" date="2008" name="Cell. Mol. Life Sci.">
        <title>Molecular diversity and evolution of cystine knot toxins of the tarantula Chilobrachys jingzhao.</title>
        <authorList>
            <person name="Chen J."/>
            <person name="Deng M."/>
            <person name="He Q."/>
            <person name="Meng E."/>
            <person name="Jiang L."/>
            <person name="Liao Z."/>
            <person name="Rong M."/>
            <person name="Liang S."/>
        </authorList>
    </citation>
    <scope>NUCLEOTIDE SEQUENCE [LARGE SCALE MRNA]</scope>
    <source>
        <tissue>Venom gland</tissue>
    </source>
</reference>
<sequence>MKTSVLLVILGIAAITVQCTASESVEQDSLRTFVDAVLGWNAEMASEARCGGWMAKCADSDDCCEAFHCTRFNVCGK</sequence>
<organism>
    <name type="scientific">Chilobrachys guangxiensis</name>
    <name type="common">Chinese earth tiger tarantula</name>
    <name type="synonym">Chilobrachys jingzhao</name>
    <dbReference type="NCBI Taxonomy" id="278060"/>
    <lineage>
        <taxon>Eukaryota</taxon>
        <taxon>Metazoa</taxon>
        <taxon>Ecdysozoa</taxon>
        <taxon>Arthropoda</taxon>
        <taxon>Chelicerata</taxon>
        <taxon>Arachnida</taxon>
        <taxon>Araneae</taxon>
        <taxon>Mygalomorphae</taxon>
        <taxon>Theraphosidae</taxon>
        <taxon>Chilobrachys</taxon>
    </lineage>
</organism>
<accession>B1P1E8</accession>
<dbReference type="EMBL" id="EU233879">
    <property type="protein sequence ID" value="ABY71698.1"/>
    <property type="molecule type" value="mRNA"/>
</dbReference>
<dbReference type="SMR" id="B1P1E8"/>
<dbReference type="ArachnoServer" id="AS000827">
    <property type="toxin name" value="U14-theraphotoxin-Cg1c"/>
</dbReference>
<dbReference type="GO" id="GO:0005576">
    <property type="term" value="C:extracellular region"/>
    <property type="evidence" value="ECO:0007669"/>
    <property type="project" value="UniProtKB-SubCell"/>
</dbReference>
<dbReference type="GO" id="GO:0099106">
    <property type="term" value="F:ion channel regulator activity"/>
    <property type="evidence" value="ECO:0007669"/>
    <property type="project" value="UniProtKB-KW"/>
</dbReference>
<dbReference type="GO" id="GO:0090729">
    <property type="term" value="F:toxin activity"/>
    <property type="evidence" value="ECO:0007669"/>
    <property type="project" value="UniProtKB-KW"/>
</dbReference>
<name>JZT22_CHIGU</name>
<feature type="signal peptide" evidence="2">
    <location>
        <begin position="1"/>
        <end position="21"/>
    </location>
</feature>
<feature type="propeptide" id="PRO_0000398445" evidence="1">
    <location>
        <begin position="22"/>
        <end position="49"/>
    </location>
</feature>
<feature type="peptide" id="PRO_0000398446" description="U14-theraphotoxin-Cg1b">
    <location>
        <begin position="50"/>
        <end position="77"/>
    </location>
</feature>
<feature type="disulfide bond" evidence="1">
    <location>
        <begin position="50"/>
        <end position="64"/>
    </location>
</feature>
<feature type="disulfide bond" evidence="1">
    <location>
        <begin position="57"/>
        <end position="69"/>
    </location>
</feature>
<feature type="disulfide bond" evidence="1">
    <location>
        <begin position="63"/>
        <end position="75"/>
    </location>
</feature>